<name>Y1408_RHIEC</name>
<accession>Q2KAC5</accession>
<feature type="chain" id="PRO_0000282256" description="UPF0060 membrane protein RHE_CH01408">
    <location>
        <begin position="1"/>
        <end position="106"/>
    </location>
</feature>
<feature type="transmembrane region" description="Helical" evidence="1">
    <location>
        <begin position="4"/>
        <end position="24"/>
    </location>
</feature>
<feature type="transmembrane region" description="Helical" evidence="1">
    <location>
        <begin position="30"/>
        <end position="50"/>
    </location>
</feature>
<feature type="transmembrane region" description="Helical" evidence="1">
    <location>
        <begin position="59"/>
        <end position="79"/>
    </location>
</feature>
<feature type="transmembrane region" description="Helical" evidence="1">
    <location>
        <begin position="86"/>
        <end position="106"/>
    </location>
</feature>
<keyword id="KW-0997">Cell inner membrane</keyword>
<keyword id="KW-1003">Cell membrane</keyword>
<keyword id="KW-0472">Membrane</keyword>
<keyword id="KW-1185">Reference proteome</keyword>
<keyword id="KW-0812">Transmembrane</keyword>
<keyword id="KW-1133">Transmembrane helix</keyword>
<evidence type="ECO:0000255" key="1">
    <source>
        <dbReference type="HAMAP-Rule" id="MF_00010"/>
    </source>
</evidence>
<evidence type="ECO:0000305" key="2"/>
<gene>
    <name type="ordered locus">RHE_CH01408</name>
</gene>
<comment type="subcellular location">
    <subcellularLocation>
        <location evidence="1">Cell inner membrane</location>
        <topology evidence="1">Multi-pass membrane protein</topology>
    </subcellularLocation>
</comment>
<comment type="similarity">
    <text evidence="1">Belongs to the UPF0060 family.</text>
</comment>
<comment type="sequence caution" evidence="2">
    <conflict type="erroneous initiation">
        <sequence resource="EMBL-CDS" id="ABC90211"/>
    </conflict>
</comment>
<proteinExistence type="inferred from homology"/>
<organism>
    <name type="scientific">Rhizobium etli (strain ATCC 51251 / DSM 11541 / JCM 21823 / NBRC 15573 / CFN 42)</name>
    <dbReference type="NCBI Taxonomy" id="347834"/>
    <lineage>
        <taxon>Bacteria</taxon>
        <taxon>Pseudomonadati</taxon>
        <taxon>Pseudomonadota</taxon>
        <taxon>Alphaproteobacteria</taxon>
        <taxon>Hyphomicrobiales</taxon>
        <taxon>Rhizobiaceae</taxon>
        <taxon>Rhizobium/Agrobacterium group</taxon>
        <taxon>Rhizobium</taxon>
    </lineage>
</organism>
<protein>
    <recommendedName>
        <fullName evidence="1">UPF0060 membrane protein RHE_CH01408</fullName>
    </recommendedName>
</protein>
<reference key="1">
    <citation type="journal article" date="2006" name="Proc. Natl. Acad. Sci. U.S.A.">
        <title>The partitioned Rhizobium etli genome: genetic and metabolic redundancy in seven interacting replicons.</title>
        <authorList>
            <person name="Gonzalez V."/>
            <person name="Santamaria R.I."/>
            <person name="Bustos P."/>
            <person name="Hernandez-Gonzalez I."/>
            <person name="Medrano-Soto A."/>
            <person name="Moreno-Hagelsieb G."/>
            <person name="Janga S.C."/>
            <person name="Ramirez M.A."/>
            <person name="Jimenez-Jacinto V."/>
            <person name="Collado-Vides J."/>
            <person name="Davila G."/>
        </authorList>
    </citation>
    <scope>NUCLEOTIDE SEQUENCE [LARGE SCALE GENOMIC DNA]</scope>
    <source>
        <strain>ATCC 51251 / DSM 11541 / JCM 21823 / NBRC 15573 / CFN 42</strain>
    </source>
</reference>
<sequence>MTYIIYAFAAVFEIAGCFAFWAWLKLEKPAWWLAPGMISLALFAWLLTLVPSDAAGRTFAAYGGIYILASLSWLWLIEGRVPDRYDIGGGLICLAGASVILFAPRA</sequence>
<dbReference type="EMBL" id="CP000133">
    <property type="protein sequence ID" value="ABC90211.1"/>
    <property type="status" value="ALT_INIT"/>
    <property type="molecule type" value="Genomic_DNA"/>
</dbReference>
<dbReference type="RefSeq" id="WP_041678603.1">
    <property type="nucleotide sequence ID" value="NC_007761.1"/>
</dbReference>
<dbReference type="SMR" id="Q2KAC5"/>
<dbReference type="KEGG" id="ret:RHE_CH01408"/>
<dbReference type="eggNOG" id="COG1742">
    <property type="taxonomic scope" value="Bacteria"/>
</dbReference>
<dbReference type="HOGENOM" id="CLU_117653_1_1_5"/>
<dbReference type="OrthoDB" id="123240at2"/>
<dbReference type="Proteomes" id="UP000001936">
    <property type="component" value="Chromosome"/>
</dbReference>
<dbReference type="GO" id="GO:0005886">
    <property type="term" value="C:plasma membrane"/>
    <property type="evidence" value="ECO:0007669"/>
    <property type="project" value="UniProtKB-SubCell"/>
</dbReference>
<dbReference type="HAMAP" id="MF_00010">
    <property type="entry name" value="UPF0060"/>
    <property type="match status" value="1"/>
</dbReference>
<dbReference type="InterPro" id="IPR003844">
    <property type="entry name" value="UPF0060"/>
</dbReference>
<dbReference type="NCBIfam" id="NF002586">
    <property type="entry name" value="PRK02237.1"/>
    <property type="match status" value="1"/>
</dbReference>
<dbReference type="PANTHER" id="PTHR36116">
    <property type="entry name" value="UPF0060 MEMBRANE PROTEIN YNFA"/>
    <property type="match status" value="1"/>
</dbReference>
<dbReference type="PANTHER" id="PTHR36116:SF1">
    <property type="entry name" value="UPF0060 MEMBRANE PROTEIN YNFA"/>
    <property type="match status" value="1"/>
</dbReference>
<dbReference type="Pfam" id="PF02694">
    <property type="entry name" value="UPF0060"/>
    <property type="match status" value="1"/>
</dbReference>
<dbReference type="SUPFAM" id="SSF103481">
    <property type="entry name" value="Multidrug resistance efflux transporter EmrE"/>
    <property type="match status" value="1"/>
</dbReference>